<name>KAS1_STRRM</name>
<reference key="1">
    <citation type="journal article" date="1994" name="Gene">
        <title>Sequences of the oxytetracycline polyketide synthase-encoding otc genes from Streptomyces rimosus.</title>
        <authorList>
            <person name="Kim E.S."/>
            <person name="Bibb M.J."/>
            <person name="Butler M.J."/>
            <person name="Hopwood D.A."/>
            <person name="Sherman D.H."/>
        </authorList>
    </citation>
    <scope>NUCLEOTIDE SEQUENCE [GENOMIC DNA]</scope>
</reference>
<comment type="pathway">
    <text>Antibiotic biosynthesis; oxytetracycline biosynthesis.</text>
</comment>
<comment type="similarity">
    <text evidence="2">Belongs to the thiolase-like superfamily. Beta-ketoacyl-ACP synthases family.</text>
</comment>
<accession>P43678</accession>
<feature type="chain" id="PRO_0000180339" description="Oxytetracycline polyketide putative beta-ketoacyl synthase 1">
    <location>
        <begin position="1"/>
        <end position="425"/>
    </location>
</feature>
<feature type="domain" description="Ketosynthase family 3 (KS3)" evidence="1">
    <location>
        <begin position="7"/>
        <end position="420"/>
    </location>
</feature>
<feature type="active site" description="For beta-ketoacyl synthase activity" evidence="1">
    <location>
        <position position="173"/>
    </location>
</feature>
<feature type="active site" description="For beta-ketoacyl synthase activity" evidence="1">
    <location>
        <position position="313"/>
    </location>
</feature>
<feature type="active site" description="For beta-ketoacyl synthase activity" evidence="1">
    <location>
        <position position="350"/>
    </location>
</feature>
<protein>
    <recommendedName>
        <fullName>Oxytetracycline polyketide putative beta-ketoacyl synthase 1</fullName>
    </recommendedName>
</protein>
<evidence type="ECO:0000255" key="1">
    <source>
        <dbReference type="PROSITE-ProRule" id="PRU01348"/>
    </source>
</evidence>
<evidence type="ECO:0000305" key="2"/>
<dbReference type="EMBL" id="Z25538">
    <property type="protein sequence ID" value="CAA80985.1"/>
    <property type="molecule type" value="Genomic_DNA"/>
</dbReference>
<dbReference type="SMR" id="P43678"/>
<dbReference type="UniPathway" id="UPA00926"/>
<dbReference type="GO" id="GO:0005829">
    <property type="term" value="C:cytosol"/>
    <property type="evidence" value="ECO:0007669"/>
    <property type="project" value="TreeGrafter"/>
</dbReference>
<dbReference type="GO" id="GO:0004315">
    <property type="term" value="F:3-oxoacyl-[acyl-carrier-protein] synthase activity"/>
    <property type="evidence" value="ECO:0007669"/>
    <property type="project" value="InterPro"/>
</dbReference>
<dbReference type="GO" id="GO:0017000">
    <property type="term" value="P:antibiotic biosynthetic process"/>
    <property type="evidence" value="ECO:0007669"/>
    <property type="project" value="UniProtKB-KW"/>
</dbReference>
<dbReference type="GO" id="GO:0006633">
    <property type="term" value="P:fatty acid biosynthetic process"/>
    <property type="evidence" value="ECO:0007669"/>
    <property type="project" value="InterPro"/>
</dbReference>
<dbReference type="CDD" id="cd00834">
    <property type="entry name" value="KAS_I_II"/>
    <property type="match status" value="1"/>
</dbReference>
<dbReference type="FunFam" id="3.40.47.10:FF:000029">
    <property type="entry name" value="3-oxoacyl-[acyl-carrier-protein] synthase 1"/>
    <property type="match status" value="1"/>
</dbReference>
<dbReference type="FunFam" id="3.40.47.10:FF:000018">
    <property type="entry name" value="3-oxoacyl-[acyl-carrier-protein] synthase 2"/>
    <property type="match status" value="1"/>
</dbReference>
<dbReference type="Gene3D" id="3.40.47.10">
    <property type="match status" value="2"/>
</dbReference>
<dbReference type="InterPro" id="IPR000794">
    <property type="entry name" value="Beta-ketoacyl_synthase"/>
</dbReference>
<dbReference type="InterPro" id="IPR018201">
    <property type="entry name" value="Ketoacyl_synth_AS"/>
</dbReference>
<dbReference type="InterPro" id="IPR014031">
    <property type="entry name" value="Ketoacyl_synth_C"/>
</dbReference>
<dbReference type="InterPro" id="IPR014030">
    <property type="entry name" value="Ketoacyl_synth_N"/>
</dbReference>
<dbReference type="InterPro" id="IPR020841">
    <property type="entry name" value="PKS_Beta-ketoAc_synthase_dom"/>
</dbReference>
<dbReference type="InterPro" id="IPR016039">
    <property type="entry name" value="Thiolase-like"/>
</dbReference>
<dbReference type="PANTHER" id="PTHR11712:SF336">
    <property type="entry name" value="3-OXOACYL-[ACYL-CARRIER-PROTEIN] SYNTHASE, MITOCHONDRIAL"/>
    <property type="match status" value="1"/>
</dbReference>
<dbReference type="PANTHER" id="PTHR11712">
    <property type="entry name" value="POLYKETIDE SYNTHASE-RELATED"/>
    <property type="match status" value="1"/>
</dbReference>
<dbReference type="Pfam" id="PF00109">
    <property type="entry name" value="ketoacyl-synt"/>
    <property type="match status" value="1"/>
</dbReference>
<dbReference type="Pfam" id="PF02801">
    <property type="entry name" value="Ketoacyl-synt_C"/>
    <property type="match status" value="1"/>
</dbReference>
<dbReference type="SMART" id="SM00825">
    <property type="entry name" value="PKS_KS"/>
    <property type="match status" value="1"/>
</dbReference>
<dbReference type="SUPFAM" id="SSF53901">
    <property type="entry name" value="Thiolase-like"/>
    <property type="match status" value="2"/>
</dbReference>
<dbReference type="PROSITE" id="PS00606">
    <property type="entry name" value="KS3_1"/>
    <property type="match status" value="1"/>
</dbReference>
<dbReference type="PROSITE" id="PS52004">
    <property type="entry name" value="KS3_2"/>
    <property type="match status" value="1"/>
</dbReference>
<keyword id="KW-0012">Acyltransferase</keyword>
<keyword id="KW-0045">Antibiotic biosynthesis</keyword>
<keyword id="KW-0808">Transferase</keyword>
<sequence>MSKIHDARRVVITGIGVVAPGDVGTKPFWEMLTAGRTATRPISSFDASPFRSQVAAECDFDPAAEGLSQRQVRAWDRTMQFAYVAAREALADSGVTGEADPLRTGVMAGTACGMTMSLDREYAVVSDEGRLWQVDDAHGVPYLYDYFVPSSMAAEIAWLAEAEGPAGVVSAGCTSGIDVLTHAADLVRDGAAEVMVAGASDAAISPITVACFDAIKATTPRNDEPETASRPFDRTRNGFVLGEGAAFFVLEEYAHARRRGARAYAEIAGYAGRCNAYSMTGLRSDGRELAEAVSRALDIARVDPSEVDYVNAHGSATKQNDLHETAAFKRSLGPHAYSVPISSIKSMIGHSLGAICALEVAASALRIEHGVIPPTANLREPDPDCDLDYVPLVAREAEVSTVVSVASGFGGFQSAIVLTEPGRQR</sequence>
<proteinExistence type="inferred from homology"/>
<organism>
    <name type="scientific">Streptomyces rimosus</name>
    <dbReference type="NCBI Taxonomy" id="1927"/>
    <lineage>
        <taxon>Bacteria</taxon>
        <taxon>Bacillati</taxon>
        <taxon>Actinomycetota</taxon>
        <taxon>Actinomycetes</taxon>
        <taxon>Kitasatosporales</taxon>
        <taxon>Streptomycetaceae</taxon>
        <taxon>Streptomyces</taxon>
    </lineage>
</organism>